<reference key="1">
    <citation type="submission" date="2008-02" db="EMBL/GenBank/DDBJ databases">
        <title>Complete sequence of Yersinia pseudotuberculosis YPIII.</title>
        <authorList>
            <consortium name="US DOE Joint Genome Institute"/>
            <person name="Copeland A."/>
            <person name="Lucas S."/>
            <person name="Lapidus A."/>
            <person name="Glavina del Rio T."/>
            <person name="Dalin E."/>
            <person name="Tice H."/>
            <person name="Bruce D."/>
            <person name="Goodwin L."/>
            <person name="Pitluck S."/>
            <person name="Munk A.C."/>
            <person name="Brettin T."/>
            <person name="Detter J.C."/>
            <person name="Han C."/>
            <person name="Tapia R."/>
            <person name="Schmutz J."/>
            <person name="Larimer F."/>
            <person name="Land M."/>
            <person name="Hauser L."/>
            <person name="Challacombe J.F."/>
            <person name="Green L."/>
            <person name="Lindler L.E."/>
            <person name="Nikolich M.P."/>
            <person name="Richardson P."/>
        </authorList>
    </citation>
    <scope>NUCLEOTIDE SEQUENCE [LARGE SCALE GENOMIC DNA]</scope>
    <source>
        <strain>YPIII</strain>
    </source>
</reference>
<name>CCME_YERPY</name>
<sequence length="164" mass="18033">MNPRRKSRLYLAMVVLIGISLTTTLVLYALRSNIDLFYTPGEILQGKGERHEKPAIGQRLRIGGMVMPGSVQRDAKTLEMSFQVYDARGAVTVTYTGILPDLFREGQGVVAQGVFAEGNTVHAKEVLAKHDEKYTPPEVEEAMKENHSRPAAAYRGTNTTGNAL</sequence>
<comment type="function">
    <text evidence="1">Heme chaperone required for the biogenesis of c-type cytochromes. Transiently binds heme delivered by CcmC and transfers the heme to apo-cytochromes in a process facilitated by CcmF and CcmH.</text>
</comment>
<comment type="subcellular location">
    <subcellularLocation>
        <location evidence="1">Cell inner membrane</location>
        <topology evidence="1">Single-pass type II membrane protein</topology>
        <orientation evidence="1">Periplasmic side</orientation>
    </subcellularLocation>
</comment>
<comment type="similarity">
    <text evidence="1">Belongs to the CcmE/CycJ family.</text>
</comment>
<accession>B1JGF3</accession>
<evidence type="ECO:0000255" key="1">
    <source>
        <dbReference type="HAMAP-Rule" id="MF_01959"/>
    </source>
</evidence>
<evidence type="ECO:0000256" key="2">
    <source>
        <dbReference type="SAM" id="MobiDB-lite"/>
    </source>
</evidence>
<organism>
    <name type="scientific">Yersinia pseudotuberculosis serotype O:3 (strain YPIII)</name>
    <dbReference type="NCBI Taxonomy" id="502800"/>
    <lineage>
        <taxon>Bacteria</taxon>
        <taxon>Pseudomonadati</taxon>
        <taxon>Pseudomonadota</taxon>
        <taxon>Gammaproteobacteria</taxon>
        <taxon>Enterobacterales</taxon>
        <taxon>Yersiniaceae</taxon>
        <taxon>Yersinia</taxon>
    </lineage>
</organism>
<dbReference type="EMBL" id="CP000950">
    <property type="protein sequence ID" value="ACA67793.1"/>
    <property type="molecule type" value="Genomic_DNA"/>
</dbReference>
<dbReference type="RefSeq" id="WP_002209697.1">
    <property type="nucleotide sequence ID" value="NZ_CP009792.1"/>
</dbReference>
<dbReference type="SMR" id="B1JGF3"/>
<dbReference type="GeneID" id="57975951"/>
<dbReference type="KEGG" id="ypy:YPK_1500"/>
<dbReference type="PATRIC" id="fig|502800.11.peg.2139"/>
<dbReference type="GO" id="GO:0005886">
    <property type="term" value="C:plasma membrane"/>
    <property type="evidence" value="ECO:0007669"/>
    <property type="project" value="UniProtKB-SubCell"/>
</dbReference>
<dbReference type="GO" id="GO:0020037">
    <property type="term" value="F:heme binding"/>
    <property type="evidence" value="ECO:0007669"/>
    <property type="project" value="InterPro"/>
</dbReference>
<dbReference type="GO" id="GO:0046872">
    <property type="term" value="F:metal ion binding"/>
    <property type="evidence" value="ECO:0007669"/>
    <property type="project" value="UniProtKB-KW"/>
</dbReference>
<dbReference type="GO" id="GO:0017004">
    <property type="term" value="P:cytochrome complex assembly"/>
    <property type="evidence" value="ECO:0007669"/>
    <property type="project" value="UniProtKB-KW"/>
</dbReference>
<dbReference type="FunFam" id="2.40.50.140:FF:000104">
    <property type="entry name" value="Cytochrome c-type biogenesis protein CcmE"/>
    <property type="match status" value="1"/>
</dbReference>
<dbReference type="Gene3D" id="2.40.50.140">
    <property type="entry name" value="Nucleic acid-binding proteins"/>
    <property type="match status" value="1"/>
</dbReference>
<dbReference type="HAMAP" id="MF_01959">
    <property type="entry name" value="CcmE"/>
    <property type="match status" value="1"/>
</dbReference>
<dbReference type="InterPro" id="IPR004329">
    <property type="entry name" value="CcmE"/>
</dbReference>
<dbReference type="InterPro" id="IPR036127">
    <property type="entry name" value="CcmE-like_sf"/>
</dbReference>
<dbReference type="InterPro" id="IPR012340">
    <property type="entry name" value="NA-bd_OB-fold"/>
</dbReference>
<dbReference type="NCBIfam" id="NF009635">
    <property type="entry name" value="PRK13150.1"/>
    <property type="match status" value="1"/>
</dbReference>
<dbReference type="NCBIfam" id="NF009638">
    <property type="entry name" value="PRK13165.1"/>
    <property type="match status" value="1"/>
</dbReference>
<dbReference type="NCBIfam" id="NF009727">
    <property type="entry name" value="PRK13254.1-1"/>
    <property type="match status" value="1"/>
</dbReference>
<dbReference type="NCBIfam" id="NF009729">
    <property type="entry name" value="PRK13254.1-3"/>
    <property type="match status" value="1"/>
</dbReference>
<dbReference type="NCBIfam" id="NF009731">
    <property type="entry name" value="PRK13254.1-5"/>
    <property type="match status" value="1"/>
</dbReference>
<dbReference type="PANTHER" id="PTHR34128">
    <property type="entry name" value="CYTOCHROME C-TYPE BIOGENESIS PROTEIN CCME HOMOLOG, MITOCHONDRIAL"/>
    <property type="match status" value="1"/>
</dbReference>
<dbReference type="PANTHER" id="PTHR34128:SF2">
    <property type="entry name" value="CYTOCHROME C-TYPE BIOGENESIS PROTEIN CCME HOMOLOG, MITOCHONDRIAL"/>
    <property type="match status" value="1"/>
</dbReference>
<dbReference type="Pfam" id="PF03100">
    <property type="entry name" value="CcmE"/>
    <property type="match status" value="1"/>
</dbReference>
<dbReference type="SUPFAM" id="SSF82093">
    <property type="entry name" value="Heme chaperone CcmE"/>
    <property type="match status" value="1"/>
</dbReference>
<keyword id="KW-0997">Cell inner membrane</keyword>
<keyword id="KW-1003">Cell membrane</keyword>
<keyword id="KW-0201">Cytochrome c-type biogenesis</keyword>
<keyword id="KW-0349">Heme</keyword>
<keyword id="KW-0408">Iron</keyword>
<keyword id="KW-0472">Membrane</keyword>
<keyword id="KW-0479">Metal-binding</keyword>
<keyword id="KW-0735">Signal-anchor</keyword>
<keyword id="KW-0812">Transmembrane</keyword>
<keyword id="KW-1133">Transmembrane helix</keyword>
<protein>
    <recommendedName>
        <fullName evidence="1">Cytochrome c-type biogenesis protein CcmE</fullName>
    </recommendedName>
    <alternativeName>
        <fullName evidence="1">Cytochrome c maturation protein E</fullName>
    </alternativeName>
    <alternativeName>
        <fullName evidence="1">Heme chaperone CcmE</fullName>
    </alternativeName>
</protein>
<proteinExistence type="inferred from homology"/>
<feature type="chain" id="PRO_1000189064" description="Cytochrome c-type biogenesis protein CcmE">
    <location>
        <begin position="1"/>
        <end position="164"/>
    </location>
</feature>
<feature type="topological domain" description="Cytoplasmic" evidence="1">
    <location>
        <begin position="1"/>
        <end position="8"/>
    </location>
</feature>
<feature type="transmembrane region" description="Helical; Signal-anchor for type II membrane protein" evidence="1">
    <location>
        <begin position="9"/>
        <end position="29"/>
    </location>
</feature>
<feature type="topological domain" description="Periplasmic" evidence="1">
    <location>
        <begin position="30"/>
        <end position="164"/>
    </location>
</feature>
<feature type="region of interest" description="Disordered" evidence="2">
    <location>
        <begin position="140"/>
        <end position="164"/>
    </location>
</feature>
<feature type="binding site" description="covalent" evidence="1">
    <location>
        <position position="130"/>
    </location>
    <ligand>
        <name>heme</name>
        <dbReference type="ChEBI" id="CHEBI:30413"/>
    </ligand>
</feature>
<feature type="binding site" description="axial binding residue" evidence="1">
    <location>
        <position position="134"/>
    </location>
    <ligand>
        <name>heme</name>
        <dbReference type="ChEBI" id="CHEBI:30413"/>
    </ligand>
    <ligandPart>
        <name>Fe</name>
        <dbReference type="ChEBI" id="CHEBI:18248"/>
    </ligandPart>
</feature>
<gene>
    <name evidence="1" type="primary">ccmE</name>
    <name evidence="1" type="synonym">cycJ</name>
    <name type="ordered locus">YPK_1500</name>
</gene>